<proteinExistence type="inferred from homology"/>
<reference key="1">
    <citation type="journal article" date="2002" name="J. Bacteriol.">
        <title>Whole-genome comparison of Mycobacterium tuberculosis clinical and laboratory strains.</title>
        <authorList>
            <person name="Fleischmann R.D."/>
            <person name="Alland D."/>
            <person name="Eisen J.A."/>
            <person name="Carpenter L."/>
            <person name="White O."/>
            <person name="Peterson J.D."/>
            <person name="DeBoy R.T."/>
            <person name="Dodson R.J."/>
            <person name="Gwinn M.L."/>
            <person name="Haft D.H."/>
            <person name="Hickey E.K."/>
            <person name="Kolonay J.F."/>
            <person name="Nelson W.C."/>
            <person name="Umayam L.A."/>
            <person name="Ermolaeva M.D."/>
            <person name="Salzberg S.L."/>
            <person name="Delcher A."/>
            <person name="Utterback T.R."/>
            <person name="Weidman J.F."/>
            <person name="Khouri H.M."/>
            <person name="Gill J."/>
            <person name="Mikula A."/>
            <person name="Bishai W."/>
            <person name="Jacobs W.R. Jr."/>
            <person name="Venter J.C."/>
            <person name="Fraser C.M."/>
        </authorList>
    </citation>
    <scope>NUCLEOTIDE SEQUENCE [LARGE SCALE GENOMIC DNA]</scope>
    <source>
        <strain>CDC 1551 / Oshkosh</strain>
    </source>
</reference>
<gene>
    <name type="primary">sdaA</name>
    <name type="ordered locus">MT0075</name>
</gene>
<sequence>MTISVFDLFTIGIGPSSSHTVGPMRAANQFVVALRRRGHLDDLEAMRVDLFGSLAATGAGHGTMSAILLGLEGCQPETITTEHKERRLAEIAASGVTRIGGVIPVPLTERDIDLHPDIVLPTHPNGMTFTAAGPHGRVLATETYFSVGGGFIVTEQTSGNSGQHPCSVALPYVSAQELLDICDRLDVSISEAALRNETCCRTENEVRAALLHLRDVMVECEQRSIAREGLLPGGLRVRRRAKVWYDRLNAEDPTRKPEFAEDWVNLVALAVNEENASGGRVVTAPTNGAAGIVPAVLHYAIHYTSAGAGDPDDVTVRFLLTAGAIGSLFKERASISGAEVGCQGEVGSAAAMAAAGLAEILGGTPRQVENAAEIAMEHSLGLTCDPIAGLVQIPCIERNAISAGKAINAARMALRGDGIHRVTLDQVIDTMRATGADMHTKYKETSAGGLAINVAVNIVEC</sequence>
<dbReference type="EC" id="4.3.1.17"/>
<dbReference type="EMBL" id="AE000516">
    <property type="protein sequence ID" value="AAK44299.1"/>
    <property type="molecule type" value="Genomic_DNA"/>
</dbReference>
<dbReference type="PIR" id="F70848">
    <property type="entry name" value="F70848"/>
</dbReference>
<dbReference type="RefSeq" id="WP_003400600.1">
    <property type="nucleotide sequence ID" value="NZ_KK341227.1"/>
</dbReference>
<dbReference type="SMR" id="P9WGT4"/>
<dbReference type="KEGG" id="mtc:MT0075"/>
<dbReference type="PATRIC" id="fig|83331.31.peg.78"/>
<dbReference type="HOGENOM" id="CLU_022305_0_1_11"/>
<dbReference type="UniPathway" id="UPA00138"/>
<dbReference type="Proteomes" id="UP000001020">
    <property type="component" value="Chromosome"/>
</dbReference>
<dbReference type="GO" id="GO:0051539">
    <property type="term" value="F:4 iron, 4 sulfur cluster binding"/>
    <property type="evidence" value="ECO:0007669"/>
    <property type="project" value="UniProtKB-KW"/>
</dbReference>
<dbReference type="GO" id="GO:0003941">
    <property type="term" value="F:L-serine ammonia-lyase activity"/>
    <property type="evidence" value="ECO:0007669"/>
    <property type="project" value="UniProtKB-EC"/>
</dbReference>
<dbReference type="GO" id="GO:0046872">
    <property type="term" value="F:metal ion binding"/>
    <property type="evidence" value="ECO:0007669"/>
    <property type="project" value="UniProtKB-KW"/>
</dbReference>
<dbReference type="GO" id="GO:0006094">
    <property type="term" value="P:gluconeogenesis"/>
    <property type="evidence" value="ECO:0007669"/>
    <property type="project" value="UniProtKB-UniPathway"/>
</dbReference>
<dbReference type="FunFam" id="3.30.1330.90:FF:000001">
    <property type="entry name" value="L-serine ammonia-lyase 1"/>
    <property type="match status" value="1"/>
</dbReference>
<dbReference type="Gene3D" id="3.30.1330.90">
    <property type="entry name" value="D-3-phosphoglycerate dehydrogenase, domain 3"/>
    <property type="match status" value="1"/>
</dbReference>
<dbReference type="InterPro" id="IPR029009">
    <property type="entry name" value="ASB_dom_sf"/>
</dbReference>
<dbReference type="InterPro" id="IPR051318">
    <property type="entry name" value="Fe-S_L-Ser"/>
</dbReference>
<dbReference type="InterPro" id="IPR004644">
    <property type="entry name" value="Fe-S_L-Ser_mono"/>
</dbReference>
<dbReference type="InterPro" id="IPR005130">
    <property type="entry name" value="Ser_deHydtase-like_asu"/>
</dbReference>
<dbReference type="InterPro" id="IPR005131">
    <property type="entry name" value="Ser_deHydtase_bsu"/>
</dbReference>
<dbReference type="NCBIfam" id="TIGR00720">
    <property type="entry name" value="sda_mono"/>
    <property type="match status" value="1"/>
</dbReference>
<dbReference type="PANTHER" id="PTHR30182">
    <property type="entry name" value="L-SERINE DEHYDRATASE"/>
    <property type="match status" value="1"/>
</dbReference>
<dbReference type="PANTHER" id="PTHR30182:SF1">
    <property type="entry name" value="L-SERINE DEHYDRATASE 1"/>
    <property type="match status" value="1"/>
</dbReference>
<dbReference type="Pfam" id="PF03313">
    <property type="entry name" value="SDH_alpha"/>
    <property type="match status" value="1"/>
</dbReference>
<dbReference type="Pfam" id="PF03315">
    <property type="entry name" value="SDH_beta"/>
    <property type="match status" value="1"/>
</dbReference>
<dbReference type="SUPFAM" id="SSF143548">
    <property type="entry name" value="Serine metabolism enzymes domain"/>
    <property type="match status" value="1"/>
</dbReference>
<protein>
    <recommendedName>
        <fullName>L-serine dehydratase</fullName>
        <shortName>SDH</shortName>
        <ecNumber>4.3.1.17</ecNumber>
    </recommendedName>
    <alternativeName>
        <fullName>L-serine deaminase</fullName>
        <shortName>L-SD</shortName>
    </alternativeName>
</protein>
<evidence type="ECO:0000250" key="1"/>
<evidence type="ECO:0000305" key="2"/>
<feature type="chain" id="PRO_0000428306" description="L-serine dehydratase">
    <location>
        <begin position="1"/>
        <end position="461"/>
    </location>
</feature>
<keyword id="KW-0004">4Fe-4S</keyword>
<keyword id="KW-0312">Gluconeogenesis</keyword>
<keyword id="KW-0408">Iron</keyword>
<keyword id="KW-0411">Iron-sulfur</keyword>
<keyword id="KW-0456">Lyase</keyword>
<keyword id="KW-0479">Metal-binding</keyword>
<keyword id="KW-1185">Reference proteome</keyword>
<comment type="catalytic activity">
    <reaction>
        <text>L-serine = pyruvate + NH4(+)</text>
        <dbReference type="Rhea" id="RHEA:19169"/>
        <dbReference type="ChEBI" id="CHEBI:15361"/>
        <dbReference type="ChEBI" id="CHEBI:28938"/>
        <dbReference type="ChEBI" id="CHEBI:33384"/>
        <dbReference type="EC" id="4.3.1.17"/>
    </reaction>
</comment>
<comment type="cofactor">
    <cofactor evidence="1">
        <name>[4Fe-4S] cluster</name>
        <dbReference type="ChEBI" id="CHEBI:49883"/>
    </cofactor>
    <text evidence="1">Binds 1 [4Fe-4S] cluster.</text>
</comment>
<comment type="pathway">
    <text>Carbohydrate biosynthesis; gluconeogenesis.</text>
</comment>
<comment type="similarity">
    <text evidence="2">Belongs to the iron-sulfur dependent L-serine dehydratase family.</text>
</comment>
<name>SDHL_MYCTO</name>
<organism>
    <name type="scientific">Mycobacterium tuberculosis (strain CDC 1551 / Oshkosh)</name>
    <dbReference type="NCBI Taxonomy" id="83331"/>
    <lineage>
        <taxon>Bacteria</taxon>
        <taxon>Bacillati</taxon>
        <taxon>Actinomycetota</taxon>
        <taxon>Actinomycetes</taxon>
        <taxon>Mycobacteriales</taxon>
        <taxon>Mycobacteriaceae</taxon>
        <taxon>Mycobacterium</taxon>
        <taxon>Mycobacterium tuberculosis complex</taxon>
    </lineage>
</organism>
<accession>P9WGT4</accession>
<accession>L0T5F2</accession>
<accession>O53614</accession>
<accession>P66773</accession>